<keyword id="KW-0413">Isomerase</keyword>
<keyword id="KW-0460">Magnesium</keyword>
<keyword id="KW-0479">Metal-binding</keyword>
<keyword id="KW-0597">Phosphoprotein</keyword>
<keyword id="KW-1185">Reference proteome</keyword>
<gene>
    <name evidence="1" type="primary">glmM</name>
    <name type="ordered locus">Dred_0294</name>
</gene>
<sequence length="444" mass="47704">MAKLFGTDGVRGVANTELTAELAFRLGRAGAHVLTRQGHSKKIIIGRDTRISGDMLEAALVAGICSVGVDVYKIGVLPTPGIAYLTRKLGAGAGVVISASHNPVQDNGIKFFGPSGYKLPDELESQIEKLALDDQAELPRPTGGELGRLYYVEDAVDQYVDFAKATISTDLKGLKIVVDCANGAAYAVAPRILSELGAEVIPIFHRPDGVNINAHCGSTHPETLMEEVVKQGADLGLAHDGDADRVLAVDHLGNLVDGDQIMVLCAKHLKSKGKLRKNTTVVTVMSNLGLYKALERSGIEVVETKVGDRYVLEKLLETGARFGGEQSGHIIFLQHNTTGDGIITALQLLAVVKETGMSLAQLAGQMERYPQILKNVQVKDKNYVMNSPIISEAIRRFERDLAGQGRILVRPSGTEPLVRIMVEGKDMAELQSIVDKMAEIVGNI</sequence>
<feature type="chain" id="PRO_1000073572" description="Phosphoglucosamine mutase">
    <location>
        <begin position="1"/>
        <end position="444"/>
    </location>
</feature>
<feature type="active site" description="Phosphoserine intermediate" evidence="1">
    <location>
        <position position="100"/>
    </location>
</feature>
<feature type="binding site" description="via phosphate group" evidence="1">
    <location>
        <position position="100"/>
    </location>
    <ligand>
        <name>Mg(2+)</name>
        <dbReference type="ChEBI" id="CHEBI:18420"/>
    </ligand>
</feature>
<feature type="binding site" evidence="1">
    <location>
        <position position="240"/>
    </location>
    <ligand>
        <name>Mg(2+)</name>
        <dbReference type="ChEBI" id="CHEBI:18420"/>
    </ligand>
</feature>
<feature type="binding site" evidence="1">
    <location>
        <position position="242"/>
    </location>
    <ligand>
        <name>Mg(2+)</name>
        <dbReference type="ChEBI" id="CHEBI:18420"/>
    </ligand>
</feature>
<feature type="binding site" evidence="1">
    <location>
        <position position="244"/>
    </location>
    <ligand>
        <name>Mg(2+)</name>
        <dbReference type="ChEBI" id="CHEBI:18420"/>
    </ligand>
</feature>
<feature type="modified residue" description="Phosphoserine" evidence="1">
    <location>
        <position position="100"/>
    </location>
</feature>
<reference key="1">
    <citation type="submission" date="2007-03" db="EMBL/GenBank/DDBJ databases">
        <title>Complete sequence of Desulfotomaculum reducens MI-1.</title>
        <authorList>
            <consortium name="US DOE Joint Genome Institute"/>
            <person name="Copeland A."/>
            <person name="Lucas S."/>
            <person name="Lapidus A."/>
            <person name="Barry K."/>
            <person name="Detter J.C."/>
            <person name="Glavina del Rio T."/>
            <person name="Hammon N."/>
            <person name="Israni S."/>
            <person name="Dalin E."/>
            <person name="Tice H."/>
            <person name="Pitluck S."/>
            <person name="Sims D."/>
            <person name="Brettin T."/>
            <person name="Bruce D."/>
            <person name="Han C."/>
            <person name="Tapia R."/>
            <person name="Schmutz J."/>
            <person name="Larimer F."/>
            <person name="Land M."/>
            <person name="Hauser L."/>
            <person name="Kyrpides N."/>
            <person name="Kim E."/>
            <person name="Tebo B.M."/>
            <person name="Richardson P."/>
        </authorList>
    </citation>
    <scope>NUCLEOTIDE SEQUENCE [LARGE SCALE GENOMIC DNA]</scope>
    <source>
        <strain>ATCC BAA-1160 / DSM 100696 / MI-1</strain>
    </source>
</reference>
<organism>
    <name type="scientific">Desulforamulus reducens (strain ATCC BAA-1160 / DSM 100696 / MI-1)</name>
    <name type="common">Desulfotomaculum reducens</name>
    <dbReference type="NCBI Taxonomy" id="349161"/>
    <lineage>
        <taxon>Bacteria</taxon>
        <taxon>Bacillati</taxon>
        <taxon>Bacillota</taxon>
        <taxon>Clostridia</taxon>
        <taxon>Eubacteriales</taxon>
        <taxon>Peptococcaceae</taxon>
        <taxon>Desulforamulus</taxon>
    </lineage>
</organism>
<accession>A4J190</accession>
<evidence type="ECO:0000255" key="1">
    <source>
        <dbReference type="HAMAP-Rule" id="MF_01554"/>
    </source>
</evidence>
<proteinExistence type="inferred from homology"/>
<protein>
    <recommendedName>
        <fullName evidence="1">Phosphoglucosamine mutase</fullName>
        <ecNumber evidence="1">5.4.2.10</ecNumber>
    </recommendedName>
</protein>
<name>GLMM_DESRM</name>
<comment type="function">
    <text evidence="1">Catalyzes the conversion of glucosamine-6-phosphate to glucosamine-1-phosphate.</text>
</comment>
<comment type="catalytic activity">
    <reaction evidence="1">
        <text>alpha-D-glucosamine 1-phosphate = D-glucosamine 6-phosphate</text>
        <dbReference type="Rhea" id="RHEA:23424"/>
        <dbReference type="ChEBI" id="CHEBI:58516"/>
        <dbReference type="ChEBI" id="CHEBI:58725"/>
        <dbReference type="EC" id="5.4.2.10"/>
    </reaction>
</comment>
<comment type="cofactor">
    <cofactor evidence="1">
        <name>Mg(2+)</name>
        <dbReference type="ChEBI" id="CHEBI:18420"/>
    </cofactor>
    <text evidence="1">Binds 1 Mg(2+) ion per subunit.</text>
</comment>
<comment type="PTM">
    <text evidence="1">Activated by phosphorylation.</text>
</comment>
<comment type="similarity">
    <text evidence="1">Belongs to the phosphohexose mutase family.</text>
</comment>
<dbReference type="EC" id="5.4.2.10" evidence="1"/>
<dbReference type="EMBL" id="CP000612">
    <property type="protein sequence ID" value="ABO48843.1"/>
    <property type="molecule type" value="Genomic_DNA"/>
</dbReference>
<dbReference type="RefSeq" id="WP_011876681.1">
    <property type="nucleotide sequence ID" value="NC_009253.1"/>
</dbReference>
<dbReference type="SMR" id="A4J190"/>
<dbReference type="STRING" id="349161.Dred_0294"/>
<dbReference type="KEGG" id="drm:Dred_0294"/>
<dbReference type="eggNOG" id="COG1109">
    <property type="taxonomic scope" value="Bacteria"/>
</dbReference>
<dbReference type="HOGENOM" id="CLU_016950_7_0_9"/>
<dbReference type="OrthoDB" id="9806956at2"/>
<dbReference type="Proteomes" id="UP000001556">
    <property type="component" value="Chromosome"/>
</dbReference>
<dbReference type="GO" id="GO:0005829">
    <property type="term" value="C:cytosol"/>
    <property type="evidence" value="ECO:0007669"/>
    <property type="project" value="TreeGrafter"/>
</dbReference>
<dbReference type="GO" id="GO:0000287">
    <property type="term" value="F:magnesium ion binding"/>
    <property type="evidence" value="ECO:0007669"/>
    <property type="project" value="UniProtKB-UniRule"/>
</dbReference>
<dbReference type="GO" id="GO:0008966">
    <property type="term" value="F:phosphoglucosamine mutase activity"/>
    <property type="evidence" value="ECO:0007669"/>
    <property type="project" value="UniProtKB-UniRule"/>
</dbReference>
<dbReference type="GO" id="GO:0004615">
    <property type="term" value="F:phosphomannomutase activity"/>
    <property type="evidence" value="ECO:0007669"/>
    <property type="project" value="TreeGrafter"/>
</dbReference>
<dbReference type="GO" id="GO:0005975">
    <property type="term" value="P:carbohydrate metabolic process"/>
    <property type="evidence" value="ECO:0007669"/>
    <property type="project" value="InterPro"/>
</dbReference>
<dbReference type="GO" id="GO:0009252">
    <property type="term" value="P:peptidoglycan biosynthetic process"/>
    <property type="evidence" value="ECO:0007669"/>
    <property type="project" value="TreeGrafter"/>
</dbReference>
<dbReference type="GO" id="GO:0006048">
    <property type="term" value="P:UDP-N-acetylglucosamine biosynthetic process"/>
    <property type="evidence" value="ECO:0007669"/>
    <property type="project" value="TreeGrafter"/>
</dbReference>
<dbReference type="CDD" id="cd05802">
    <property type="entry name" value="GlmM"/>
    <property type="match status" value="1"/>
</dbReference>
<dbReference type="FunFam" id="3.30.310.50:FF:000001">
    <property type="entry name" value="Phosphoglucosamine mutase"/>
    <property type="match status" value="1"/>
</dbReference>
<dbReference type="FunFam" id="3.40.120.10:FF:000001">
    <property type="entry name" value="Phosphoglucosamine mutase"/>
    <property type="match status" value="1"/>
</dbReference>
<dbReference type="FunFam" id="3.40.120.10:FF:000002">
    <property type="entry name" value="Phosphoglucosamine mutase"/>
    <property type="match status" value="1"/>
</dbReference>
<dbReference type="Gene3D" id="3.40.120.10">
    <property type="entry name" value="Alpha-D-Glucose-1,6-Bisphosphate, subunit A, domain 3"/>
    <property type="match status" value="3"/>
</dbReference>
<dbReference type="Gene3D" id="3.30.310.50">
    <property type="entry name" value="Alpha-D-phosphohexomutase, C-terminal domain"/>
    <property type="match status" value="1"/>
</dbReference>
<dbReference type="HAMAP" id="MF_01554_B">
    <property type="entry name" value="GlmM_B"/>
    <property type="match status" value="1"/>
</dbReference>
<dbReference type="InterPro" id="IPR005844">
    <property type="entry name" value="A-D-PHexomutase_a/b/a-I"/>
</dbReference>
<dbReference type="InterPro" id="IPR016055">
    <property type="entry name" value="A-D-PHexomutase_a/b/a-I/II/III"/>
</dbReference>
<dbReference type="InterPro" id="IPR005845">
    <property type="entry name" value="A-D-PHexomutase_a/b/a-II"/>
</dbReference>
<dbReference type="InterPro" id="IPR005846">
    <property type="entry name" value="A-D-PHexomutase_a/b/a-III"/>
</dbReference>
<dbReference type="InterPro" id="IPR005843">
    <property type="entry name" value="A-D-PHexomutase_C"/>
</dbReference>
<dbReference type="InterPro" id="IPR036900">
    <property type="entry name" value="A-D-PHexomutase_C_sf"/>
</dbReference>
<dbReference type="InterPro" id="IPR016066">
    <property type="entry name" value="A-D-PHexomutase_CS"/>
</dbReference>
<dbReference type="InterPro" id="IPR005841">
    <property type="entry name" value="Alpha-D-phosphohexomutase_SF"/>
</dbReference>
<dbReference type="InterPro" id="IPR006352">
    <property type="entry name" value="GlmM_bact"/>
</dbReference>
<dbReference type="InterPro" id="IPR050060">
    <property type="entry name" value="Phosphoglucosamine_mutase"/>
</dbReference>
<dbReference type="NCBIfam" id="TIGR01455">
    <property type="entry name" value="glmM"/>
    <property type="match status" value="1"/>
</dbReference>
<dbReference type="NCBIfam" id="NF008139">
    <property type="entry name" value="PRK10887.1"/>
    <property type="match status" value="1"/>
</dbReference>
<dbReference type="PANTHER" id="PTHR42946:SF1">
    <property type="entry name" value="PHOSPHOGLUCOMUTASE (ALPHA-D-GLUCOSE-1,6-BISPHOSPHATE-DEPENDENT)"/>
    <property type="match status" value="1"/>
</dbReference>
<dbReference type="PANTHER" id="PTHR42946">
    <property type="entry name" value="PHOSPHOHEXOSE MUTASE"/>
    <property type="match status" value="1"/>
</dbReference>
<dbReference type="Pfam" id="PF02878">
    <property type="entry name" value="PGM_PMM_I"/>
    <property type="match status" value="1"/>
</dbReference>
<dbReference type="Pfam" id="PF02879">
    <property type="entry name" value="PGM_PMM_II"/>
    <property type="match status" value="1"/>
</dbReference>
<dbReference type="Pfam" id="PF02880">
    <property type="entry name" value="PGM_PMM_III"/>
    <property type="match status" value="1"/>
</dbReference>
<dbReference type="Pfam" id="PF00408">
    <property type="entry name" value="PGM_PMM_IV"/>
    <property type="match status" value="1"/>
</dbReference>
<dbReference type="PRINTS" id="PR00509">
    <property type="entry name" value="PGMPMM"/>
</dbReference>
<dbReference type="SUPFAM" id="SSF55957">
    <property type="entry name" value="Phosphoglucomutase, C-terminal domain"/>
    <property type="match status" value="1"/>
</dbReference>
<dbReference type="SUPFAM" id="SSF53738">
    <property type="entry name" value="Phosphoglucomutase, first 3 domains"/>
    <property type="match status" value="3"/>
</dbReference>
<dbReference type="PROSITE" id="PS00710">
    <property type="entry name" value="PGM_PMM"/>
    <property type="match status" value="1"/>
</dbReference>